<keyword id="KW-0066">ATP synthesis</keyword>
<keyword id="KW-1003">Cell membrane</keyword>
<keyword id="KW-0139">CF(1)</keyword>
<keyword id="KW-0375">Hydrogen ion transport</keyword>
<keyword id="KW-0406">Ion transport</keyword>
<keyword id="KW-0472">Membrane</keyword>
<keyword id="KW-1185">Reference proteome</keyword>
<keyword id="KW-0813">Transport</keyword>
<dbReference type="EMBL" id="CP000673">
    <property type="protein sequence ID" value="EDK35672.1"/>
    <property type="molecule type" value="Genomic_DNA"/>
</dbReference>
<dbReference type="RefSeq" id="WP_012104005.1">
    <property type="nucleotide sequence ID" value="NC_009706.1"/>
</dbReference>
<dbReference type="SMR" id="A5N3H6"/>
<dbReference type="STRING" id="431943.CKL_3687"/>
<dbReference type="KEGG" id="ckl:CKL_3687"/>
<dbReference type="eggNOG" id="COG0355">
    <property type="taxonomic scope" value="Bacteria"/>
</dbReference>
<dbReference type="HOGENOM" id="CLU_084338_1_3_9"/>
<dbReference type="Proteomes" id="UP000002411">
    <property type="component" value="Chromosome"/>
</dbReference>
<dbReference type="GO" id="GO:0005886">
    <property type="term" value="C:plasma membrane"/>
    <property type="evidence" value="ECO:0007669"/>
    <property type="project" value="UniProtKB-SubCell"/>
</dbReference>
<dbReference type="GO" id="GO:0045259">
    <property type="term" value="C:proton-transporting ATP synthase complex"/>
    <property type="evidence" value="ECO:0007669"/>
    <property type="project" value="UniProtKB-KW"/>
</dbReference>
<dbReference type="GO" id="GO:0005524">
    <property type="term" value="F:ATP binding"/>
    <property type="evidence" value="ECO:0007669"/>
    <property type="project" value="UniProtKB-UniRule"/>
</dbReference>
<dbReference type="GO" id="GO:0046933">
    <property type="term" value="F:proton-transporting ATP synthase activity, rotational mechanism"/>
    <property type="evidence" value="ECO:0007669"/>
    <property type="project" value="UniProtKB-UniRule"/>
</dbReference>
<dbReference type="CDD" id="cd12152">
    <property type="entry name" value="F1-ATPase_delta"/>
    <property type="match status" value="1"/>
</dbReference>
<dbReference type="Gene3D" id="1.20.5.440">
    <property type="entry name" value="ATP synthase delta/epsilon subunit, C-terminal domain"/>
    <property type="match status" value="1"/>
</dbReference>
<dbReference type="Gene3D" id="2.60.15.10">
    <property type="entry name" value="F0F1 ATP synthase delta/epsilon subunit, N-terminal"/>
    <property type="match status" value="1"/>
</dbReference>
<dbReference type="HAMAP" id="MF_00530">
    <property type="entry name" value="ATP_synth_epsil_bac"/>
    <property type="match status" value="1"/>
</dbReference>
<dbReference type="InterPro" id="IPR036794">
    <property type="entry name" value="ATP_F1_dsu/esu_C_sf"/>
</dbReference>
<dbReference type="InterPro" id="IPR001469">
    <property type="entry name" value="ATP_synth_F1_dsu/esu"/>
</dbReference>
<dbReference type="InterPro" id="IPR020546">
    <property type="entry name" value="ATP_synth_F1_dsu/esu_N"/>
</dbReference>
<dbReference type="InterPro" id="IPR020547">
    <property type="entry name" value="ATP_synth_F1_esu_C"/>
</dbReference>
<dbReference type="InterPro" id="IPR036771">
    <property type="entry name" value="ATPsynth_dsu/esu_N"/>
</dbReference>
<dbReference type="NCBIfam" id="TIGR01216">
    <property type="entry name" value="ATP_synt_epsi"/>
    <property type="match status" value="1"/>
</dbReference>
<dbReference type="NCBIfam" id="NF009984">
    <property type="entry name" value="PRK13450.1"/>
    <property type="match status" value="1"/>
</dbReference>
<dbReference type="PANTHER" id="PTHR13822">
    <property type="entry name" value="ATP SYNTHASE DELTA/EPSILON CHAIN"/>
    <property type="match status" value="1"/>
</dbReference>
<dbReference type="PANTHER" id="PTHR13822:SF10">
    <property type="entry name" value="ATP SYNTHASE EPSILON CHAIN, CHLOROPLASTIC"/>
    <property type="match status" value="1"/>
</dbReference>
<dbReference type="Pfam" id="PF00401">
    <property type="entry name" value="ATP-synt_DE"/>
    <property type="match status" value="1"/>
</dbReference>
<dbReference type="Pfam" id="PF02823">
    <property type="entry name" value="ATP-synt_DE_N"/>
    <property type="match status" value="1"/>
</dbReference>
<dbReference type="SUPFAM" id="SSF46604">
    <property type="entry name" value="Epsilon subunit of F1F0-ATP synthase C-terminal domain"/>
    <property type="match status" value="1"/>
</dbReference>
<dbReference type="SUPFAM" id="SSF51344">
    <property type="entry name" value="Epsilon subunit of F1F0-ATP synthase N-terminal domain"/>
    <property type="match status" value="1"/>
</dbReference>
<protein>
    <recommendedName>
        <fullName evidence="1">ATP synthase epsilon chain</fullName>
    </recommendedName>
    <alternativeName>
        <fullName evidence="1">ATP synthase F1 sector epsilon subunit</fullName>
    </alternativeName>
    <alternativeName>
        <fullName evidence="1">F-ATPase epsilon subunit</fullName>
    </alternativeName>
</protein>
<accession>A5N3H6</accession>
<evidence type="ECO:0000255" key="1">
    <source>
        <dbReference type="HAMAP-Rule" id="MF_00530"/>
    </source>
</evidence>
<organism>
    <name type="scientific">Clostridium kluyveri (strain ATCC 8527 / DSM 555 / NBRC 12016 / NCIMB 10680 / K1)</name>
    <dbReference type="NCBI Taxonomy" id="431943"/>
    <lineage>
        <taxon>Bacteria</taxon>
        <taxon>Bacillati</taxon>
        <taxon>Bacillota</taxon>
        <taxon>Clostridia</taxon>
        <taxon>Eubacteriales</taxon>
        <taxon>Clostridiaceae</taxon>
        <taxon>Clostridium</taxon>
    </lineage>
</organism>
<gene>
    <name evidence="1" type="primary">atpC</name>
    <name type="ordered locus">CKL_3687</name>
</gene>
<comment type="function">
    <text evidence="1">Produces ATP from ADP in the presence of a proton gradient across the membrane.</text>
</comment>
<comment type="subunit">
    <text evidence="1">F-type ATPases have 2 components, CF(1) - the catalytic core - and CF(0) - the membrane proton channel. CF(1) has five subunits: alpha(3), beta(3), gamma(1), delta(1), epsilon(1). CF(0) has three main subunits: a, b and c.</text>
</comment>
<comment type="subcellular location">
    <subcellularLocation>
        <location evidence="1">Cell membrane</location>
        <topology evidence="1">Peripheral membrane protein</topology>
    </subcellularLocation>
</comment>
<comment type="similarity">
    <text evidence="1">Belongs to the ATPase epsilon chain family.</text>
</comment>
<name>ATPE_CLOK5</name>
<proteinExistence type="inferred from homology"/>
<sequence length="132" mass="14861">MAEVLKLTILTPDREFYKGEVLEVITDSIQGNITILPGHMPLITTLKSTDTRIVEKSGKELKAFTSNGILEIKNNELKILCDVCEWPGEIDLKRAEEAKKRAEQRLAHKDGIDVKRAQLALNRALARINLLK</sequence>
<reference key="1">
    <citation type="journal article" date="2008" name="Proc. Natl. Acad. Sci. U.S.A.">
        <title>The genome of Clostridium kluyveri, a strict anaerobe with unique metabolic features.</title>
        <authorList>
            <person name="Seedorf H."/>
            <person name="Fricke W.F."/>
            <person name="Veith B."/>
            <person name="Brueggemann H."/>
            <person name="Liesegang H."/>
            <person name="Strittmatter A."/>
            <person name="Miethke M."/>
            <person name="Buckel W."/>
            <person name="Hinderberger J."/>
            <person name="Li F."/>
            <person name="Hagemeier C."/>
            <person name="Thauer R.K."/>
            <person name="Gottschalk G."/>
        </authorList>
    </citation>
    <scope>NUCLEOTIDE SEQUENCE [LARGE SCALE GENOMIC DNA]</scope>
    <source>
        <strain>ATCC 8527 / DSM 555 / NBRC 12016 / NCIMB 10680 / K1</strain>
    </source>
</reference>
<feature type="chain" id="PRO_1000081726" description="ATP synthase epsilon chain">
    <location>
        <begin position="1"/>
        <end position="132"/>
    </location>
</feature>